<dbReference type="EC" id="1.-.-.-"/>
<dbReference type="EMBL" id="BC080462">
    <property type="protein sequence ID" value="AAH80462.1"/>
    <property type="molecule type" value="mRNA"/>
</dbReference>
<dbReference type="RefSeq" id="NP_001008673.1">
    <property type="nucleotide sequence ID" value="NM_001008673.1"/>
</dbReference>
<dbReference type="RefSeq" id="XP_017948001.1">
    <property type="nucleotide sequence ID" value="XM_018092512.1"/>
</dbReference>
<dbReference type="SMR" id="Q66KC4"/>
<dbReference type="FunCoup" id="Q66KC4">
    <property type="interactions" value="1278"/>
</dbReference>
<dbReference type="STRING" id="8364.ENSXETP00000001197"/>
<dbReference type="DNASU" id="493329"/>
<dbReference type="GeneID" id="493329"/>
<dbReference type="KEGG" id="xtr:493329"/>
<dbReference type="AGR" id="Xenbase:XB-GENE-5753362"/>
<dbReference type="CTD" id="84263"/>
<dbReference type="eggNOG" id="KOG0725">
    <property type="taxonomic scope" value="Eukaryota"/>
</dbReference>
<dbReference type="eggNOG" id="KOG4170">
    <property type="taxonomic scope" value="Eukaryota"/>
</dbReference>
<dbReference type="InParanoid" id="Q66KC4"/>
<dbReference type="OMA" id="WWSSVAN"/>
<dbReference type="OrthoDB" id="5327538at2759"/>
<dbReference type="Proteomes" id="UP000008143">
    <property type="component" value="Chromosome 1"/>
</dbReference>
<dbReference type="Bgee" id="ENSXETG00000002228">
    <property type="expression patterns" value="Expressed in skeletal muscle tissue and 13 other cell types or tissues"/>
</dbReference>
<dbReference type="GO" id="GO:0005739">
    <property type="term" value="C:mitochondrion"/>
    <property type="evidence" value="ECO:0000250"/>
    <property type="project" value="UniProtKB"/>
</dbReference>
<dbReference type="GO" id="GO:0005777">
    <property type="term" value="C:peroxisome"/>
    <property type="evidence" value="ECO:0007669"/>
    <property type="project" value="UniProtKB-SubCell"/>
</dbReference>
<dbReference type="GO" id="GO:0016491">
    <property type="term" value="F:oxidoreductase activity"/>
    <property type="evidence" value="ECO:0007669"/>
    <property type="project" value="UniProtKB-KW"/>
</dbReference>
<dbReference type="CDD" id="cd09762">
    <property type="entry name" value="HSDL2_SDR_c"/>
    <property type="match status" value="1"/>
</dbReference>
<dbReference type="FunFam" id="3.40.50.720:FF:000301">
    <property type="entry name" value="Hydroxysteroid dehydrogenase like 2"/>
    <property type="match status" value="1"/>
</dbReference>
<dbReference type="Gene3D" id="3.40.50.720">
    <property type="entry name" value="NAD(P)-binding Rossmann-like Domain"/>
    <property type="match status" value="1"/>
</dbReference>
<dbReference type="Gene3D" id="3.30.1050.10">
    <property type="entry name" value="SCP2 sterol-binding domain"/>
    <property type="match status" value="1"/>
</dbReference>
<dbReference type="InterPro" id="IPR051935">
    <property type="entry name" value="HSDL2"/>
</dbReference>
<dbReference type="InterPro" id="IPR036291">
    <property type="entry name" value="NAD(P)-bd_dom_sf"/>
</dbReference>
<dbReference type="InterPro" id="IPR003033">
    <property type="entry name" value="SCP2_sterol-bd_dom"/>
</dbReference>
<dbReference type="InterPro" id="IPR036527">
    <property type="entry name" value="SCP2_sterol-bd_dom_sf"/>
</dbReference>
<dbReference type="InterPro" id="IPR002347">
    <property type="entry name" value="SDR_fam"/>
</dbReference>
<dbReference type="NCBIfam" id="NF006133">
    <property type="entry name" value="PRK08278.1"/>
    <property type="match status" value="1"/>
</dbReference>
<dbReference type="PANTHER" id="PTHR42808">
    <property type="entry name" value="HYDROXYSTEROID DEHYDROGENASE-LIKE PROTEIN 2"/>
    <property type="match status" value="1"/>
</dbReference>
<dbReference type="PANTHER" id="PTHR42808:SF3">
    <property type="entry name" value="HYDROXYSTEROID DEHYDROGENASE-LIKE PROTEIN 2"/>
    <property type="match status" value="1"/>
</dbReference>
<dbReference type="Pfam" id="PF00106">
    <property type="entry name" value="adh_short"/>
    <property type="match status" value="1"/>
</dbReference>
<dbReference type="Pfam" id="PF02036">
    <property type="entry name" value="SCP2"/>
    <property type="match status" value="1"/>
</dbReference>
<dbReference type="PRINTS" id="PR00081">
    <property type="entry name" value="GDHRDH"/>
</dbReference>
<dbReference type="SUPFAM" id="SSF51735">
    <property type="entry name" value="NAD(P)-binding Rossmann-fold domains"/>
    <property type="match status" value="1"/>
</dbReference>
<dbReference type="SUPFAM" id="SSF55718">
    <property type="entry name" value="SCP-like"/>
    <property type="match status" value="1"/>
</dbReference>
<feature type="chain" id="PRO_0000319894" description="Hydroxysteroid dehydrogenase-like protein 2">
    <location>
        <begin position="1"/>
        <end position="417"/>
    </location>
</feature>
<feature type="domain" description="SCP2">
    <location>
        <begin position="306"/>
        <end position="414"/>
    </location>
</feature>
<feature type="active site" description="Proton acceptor" evidence="2">
    <location>
        <position position="168"/>
    </location>
</feature>
<feature type="binding site" evidence="1">
    <location>
        <begin position="17"/>
        <end position="23"/>
    </location>
    <ligand>
        <name>NADP(+)</name>
        <dbReference type="ChEBI" id="CHEBI:58349"/>
    </ligand>
</feature>
<feature type="binding site" evidence="1">
    <location>
        <position position="42"/>
    </location>
    <ligand>
        <name>NADP(+)</name>
        <dbReference type="ChEBI" id="CHEBI:58349"/>
    </ligand>
</feature>
<feature type="binding site" evidence="1">
    <location>
        <position position="74"/>
    </location>
    <ligand>
        <name>NADP(+)</name>
        <dbReference type="ChEBI" id="CHEBI:58349"/>
    </ligand>
</feature>
<feature type="binding site" evidence="1">
    <location>
        <position position="172"/>
    </location>
    <ligand>
        <name>NADP(+)</name>
        <dbReference type="ChEBI" id="CHEBI:58349"/>
    </ligand>
</feature>
<protein>
    <recommendedName>
        <fullName>Hydroxysteroid dehydrogenase-like protein 2</fullName>
        <ecNumber>1.-.-.-</ecNumber>
    </recommendedName>
</protein>
<gene>
    <name type="primary">hsdl2</name>
</gene>
<name>HSDL2_XENTR</name>
<sequence>MLPNTGKLAGCTLFITGASRGIGKAIALKAARDGANVVIAAKTAEAHPKLPGTIYTAASEIEAAGGKALPCIVDVRDENQISAAVEKAVDTFGGIDILVNNASAISLTNTLETPMKKVDLMMGINTRGTYLTSKICIPYLKKSKVAHILNLSPPLNLNPIWFKNHCAYTIAKYGMSMCALGMSEEYKGEIAVNALWPKTAIHTAAMDMLGGSGVDKQCRTPDIMADAAYAILSKPKDFTGNFVIDEELLKHEGIKDLDVYAVSPGHPLLPDFFLDESPEALASAMEEHGATAAFKAGKAQAKSQDSSPLQETFKAIESLVNEEAVKTTQGIYQFVLSGEESGNWFLDLKNGKGGVGSGEPSTKADVVMSMDSGDFIKMFTGKMKPTMAFMSGKLKIKGDMGLALKLEKILGQMNAKL</sequence>
<proteinExistence type="evidence at transcript level"/>
<organism>
    <name type="scientific">Xenopus tropicalis</name>
    <name type="common">Western clawed frog</name>
    <name type="synonym">Silurana tropicalis</name>
    <dbReference type="NCBI Taxonomy" id="8364"/>
    <lineage>
        <taxon>Eukaryota</taxon>
        <taxon>Metazoa</taxon>
        <taxon>Chordata</taxon>
        <taxon>Craniata</taxon>
        <taxon>Vertebrata</taxon>
        <taxon>Euteleostomi</taxon>
        <taxon>Amphibia</taxon>
        <taxon>Batrachia</taxon>
        <taxon>Anura</taxon>
        <taxon>Pipoidea</taxon>
        <taxon>Pipidae</taxon>
        <taxon>Xenopodinae</taxon>
        <taxon>Xenopus</taxon>
        <taxon>Silurana</taxon>
    </lineage>
</organism>
<reference key="1">
    <citation type="submission" date="2004-08" db="EMBL/GenBank/DDBJ databases">
        <authorList>
            <consortium name="NIH - Xenopus Gene Collection (XGC) project"/>
        </authorList>
    </citation>
    <scope>NUCLEOTIDE SEQUENCE [LARGE SCALE MRNA]</scope>
    <source>
        <tissue>Embryo</tissue>
    </source>
</reference>
<keyword id="KW-0496">Mitochondrion</keyword>
<keyword id="KW-0521">NADP</keyword>
<keyword id="KW-0560">Oxidoreductase</keyword>
<keyword id="KW-0576">Peroxisome</keyword>
<keyword id="KW-1185">Reference proteome</keyword>
<accession>Q66KC4</accession>
<evidence type="ECO:0000250" key="1">
    <source>
        <dbReference type="UniProtKB" id="Q6YN16"/>
    </source>
</evidence>
<evidence type="ECO:0000255" key="2"/>
<evidence type="ECO:0000305" key="3"/>
<comment type="function">
    <text evidence="1">Has apparently no steroid dehydrogenase activity. Might act as a metabolic regulator that affects systemic adaptation to nutritional cues.</text>
</comment>
<comment type="subcellular location">
    <subcellularLocation>
        <location evidence="1">Peroxisome</location>
    </subcellularLocation>
    <subcellularLocation>
        <location evidence="1">Mitochondrion</location>
    </subcellularLocation>
</comment>
<comment type="similarity">
    <text evidence="3">Belongs to the short-chain dehydrogenases/reductases (SDR) family.</text>
</comment>